<accession>Q48456</accession>
<sequence>MIRRKFSRVFSKRTDMHNIIRLLFRNPFFFLFCLFIPFDNTSLQSIGGIMTASPSALILLPGLFVSILSKGLKVNKNILLCFFGVLLISFLYYFYWVFYFPELDPIFILDRGSRYFLLYVFYFLALYYSLRQNIKDIRAGAALIIIVVIFSVLLNYLDPAIINNKSIIQYNDFISPERLRGFSLEASVFGYQIVCSILLLAVLLNWSTFFLVTVTIVIAILTTSKGAALSFLICICFYFSLKGKLMFRVLLSLCSIVISYIIFKYYFLDALASDIDTYSSVATRGTMFIVGLKIFLFNPLGVGFFGYLPSIYDFTSGVIDFIKSHFPFLNFDEVYTYTIPGEYKTVGTKSLILDLLIIYGVFFLIPFIYFIKKILKEFDAQSERNSYFLLLFIIFSNMFFISHLGSYFTPFCIAFLIILSKNRAENDIN</sequence>
<comment type="function">
    <text>May function as a transporter.</text>
</comment>
<comment type="subcellular location">
    <subcellularLocation>
        <location evidence="2">Cell membrane</location>
        <topology evidence="2">Multi-pass membrane protein</topology>
    </subcellularLocation>
</comment>
<evidence type="ECO:0000255" key="1"/>
<evidence type="ECO:0000305" key="2"/>
<proteinExistence type="predicted"/>
<organism>
    <name type="scientific">Klebsiella pneumoniae</name>
    <dbReference type="NCBI Taxonomy" id="573"/>
    <lineage>
        <taxon>Bacteria</taxon>
        <taxon>Pseudomonadati</taxon>
        <taxon>Pseudomonadota</taxon>
        <taxon>Gammaproteobacteria</taxon>
        <taxon>Enterobacterales</taxon>
        <taxon>Enterobacteriaceae</taxon>
        <taxon>Klebsiella/Raoultella group</taxon>
        <taxon>Klebsiella</taxon>
        <taxon>Klebsiella pneumoniae complex</taxon>
    </lineage>
</organism>
<dbReference type="EMBL" id="D21242">
    <property type="protein sequence ID" value="BAA04781.1"/>
    <property type="molecule type" value="Genomic_DNA"/>
</dbReference>
<dbReference type="GO" id="GO:0005886">
    <property type="term" value="C:plasma membrane"/>
    <property type="evidence" value="ECO:0007669"/>
    <property type="project" value="UniProtKB-SubCell"/>
</dbReference>
<feature type="chain" id="PRO_0000066161" description="Uncharacterized 49.5 kDa protein in cps region">
    <location>
        <begin position="1"/>
        <end position="429"/>
    </location>
</feature>
<feature type="transmembrane region" description="Helical" evidence="1">
    <location>
        <begin position="27"/>
        <end position="47"/>
    </location>
</feature>
<feature type="transmembrane region" description="Helical" evidence="1">
    <location>
        <begin position="48"/>
        <end position="68"/>
    </location>
</feature>
<feature type="transmembrane region" description="Helical" evidence="1">
    <location>
        <begin position="78"/>
        <end position="98"/>
    </location>
</feature>
<feature type="transmembrane region" description="Helical" evidence="1">
    <location>
        <begin position="106"/>
        <end position="126"/>
    </location>
</feature>
<feature type="transmembrane region" description="Helical" evidence="1">
    <location>
        <begin position="142"/>
        <end position="162"/>
    </location>
</feature>
<feature type="transmembrane region" description="Helical" evidence="1">
    <location>
        <begin position="198"/>
        <end position="218"/>
    </location>
</feature>
<feature type="transmembrane region" description="Helical" evidence="1">
    <location>
        <begin position="219"/>
        <end position="239"/>
    </location>
</feature>
<feature type="transmembrane region" description="Helical" evidence="1">
    <location>
        <begin position="249"/>
        <end position="269"/>
    </location>
</feature>
<feature type="transmembrane region" description="Helical" evidence="1">
    <location>
        <begin position="288"/>
        <end position="308"/>
    </location>
</feature>
<feature type="transmembrane region" description="Helical" evidence="1">
    <location>
        <begin position="351"/>
        <end position="371"/>
    </location>
</feature>
<feature type="transmembrane region" description="Helical" evidence="1">
    <location>
        <begin position="399"/>
        <end position="419"/>
    </location>
</feature>
<protein>
    <recommendedName>
        <fullName>Uncharacterized 49.5 kDa protein in cps region</fullName>
    </recommendedName>
    <alternativeName>
        <fullName>ORF10</fullName>
    </alternativeName>
</protein>
<reference key="1">
    <citation type="journal article" date="1995" name="J. Bacteriol.">
        <title>Genomic organization of the Klebsiella pneumoniae cps region responsible for serotype K2 capsular polysaccharide synthesis in the virulent strain Chedid.</title>
        <authorList>
            <person name="Arakawa Y."/>
            <person name="Wacharotayankun R."/>
            <person name="Nagatsuka T."/>
            <person name="Ito H."/>
            <person name="Kato N."/>
            <person name="Ohta M."/>
        </authorList>
    </citation>
    <scope>NUCLEOTIDE SEQUENCE [GENOMIC DNA]</scope>
    <source>
        <strain>Chedid</strain>
    </source>
</reference>
<keyword id="KW-1003">Cell membrane</keyword>
<keyword id="KW-0472">Membrane</keyword>
<keyword id="KW-0812">Transmembrane</keyword>
<keyword id="KW-1133">Transmembrane helix</keyword>
<keyword id="KW-0813">Transport</keyword>
<name>YC10_KLEPN</name>